<name>ELP3_DEHMC</name>
<dbReference type="EC" id="2.3.1.311" evidence="4"/>
<dbReference type="EMBL" id="AJ965256">
    <property type="protein sequence ID" value="CAI82774.1"/>
    <property type="molecule type" value="Genomic_DNA"/>
</dbReference>
<dbReference type="RefSeq" id="WP_011309125.1">
    <property type="nucleotide sequence ID" value="NC_007356.1"/>
</dbReference>
<dbReference type="PDB" id="5L7L">
    <property type="method" value="X-ray"/>
    <property type="resolution" value="2.59 A"/>
    <property type="chains" value="A=1-459"/>
</dbReference>
<dbReference type="PDB" id="6IA6">
    <property type="method" value="X-ray"/>
    <property type="resolution" value="2.70 A"/>
    <property type="chains" value="A=2-459"/>
</dbReference>
<dbReference type="PDBsum" id="5L7L"/>
<dbReference type="PDBsum" id="6IA6"/>
<dbReference type="SMR" id="A0A1C7D1B7"/>
<dbReference type="KEGG" id="deh:cbdbA595"/>
<dbReference type="Proteomes" id="UP000000433">
    <property type="component" value="Chromosome"/>
</dbReference>
<dbReference type="GO" id="GO:0005737">
    <property type="term" value="C:cytoplasm"/>
    <property type="evidence" value="ECO:0007669"/>
    <property type="project" value="TreeGrafter"/>
</dbReference>
<dbReference type="GO" id="GO:0051539">
    <property type="term" value="F:4 iron, 4 sulfur cluster binding"/>
    <property type="evidence" value="ECO:0007669"/>
    <property type="project" value="UniProtKB-KW"/>
</dbReference>
<dbReference type="GO" id="GO:0051536">
    <property type="term" value="F:iron-sulfur cluster binding"/>
    <property type="evidence" value="ECO:0000314"/>
    <property type="project" value="UniProtKB"/>
</dbReference>
<dbReference type="GO" id="GO:0046872">
    <property type="term" value="F:metal ion binding"/>
    <property type="evidence" value="ECO:0007669"/>
    <property type="project" value="UniProtKB-KW"/>
</dbReference>
<dbReference type="GO" id="GO:1904047">
    <property type="term" value="F:S-adenosyl-L-methionine binding"/>
    <property type="evidence" value="ECO:0000314"/>
    <property type="project" value="UniProtKB"/>
</dbReference>
<dbReference type="GO" id="GO:0000049">
    <property type="term" value="F:tRNA binding"/>
    <property type="evidence" value="ECO:0007669"/>
    <property type="project" value="UniProtKB-KW"/>
</dbReference>
<dbReference type="GO" id="GO:0106261">
    <property type="term" value="F:tRNA uridine(34) acetyltransferase activity"/>
    <property type="evidence" value="ECO:0000250"/>
    <property type="project" value="UniProtKB"/>
</dbReference>
<dbReference type="GO" id="GO:0051391">
    <property type="term" value="P:tRNA acetylation"/>
    <property type="evidence" value="ECO:0000314"/>
    <property type="project" value="UniProtKB"/>
</dbReference>
<dbReference type="GO" id="GO:0002926">
    <property type="term" value="P:tRNA wobble base 5-methoxycarbonylmethyl-2-thiouridinylation"/>
    <property type="evidence" value="ECO:0007669"/>
    <property type="project" value="TreeGrafter"/>
</dbReference>
<dbReference type="GO" id="GO:0002098">
    <property type="term" value="P:tRNA wobble uridine modification"/>
    <property type="evidence" value="ECO:0000314"/>
    <property type="project" value="UniProtKB"/>
</dbReference>
<dbReference type="CDD" id="cd01335">
    <property type="entry name" value="Radical_SAM"/>
    <property type="match status" value="1"/>
</dbReference>
<dbReference type="Gene3D" id="3.40.630.30">
    <property type="match status" value="1"/>
</dbReference>
<dbReference type="InterPro" id="IPR016181">
    <property type="entry name" value="Acyl_CoA_acyltransferase"/>
</dbReference>
<dbReference type="InterPro" id="IPR039661">
    <property type="entry name" value="ELP3"/>
</dbReference>
<dbReference type="InterPro" id="IPR034687">
    <property type="entry name" value="ELP3-like"/>
</dbReference>
<dbReference type="InterPro" id="IPR006638">
    <property type="entry name" value="Elp3/MiaA/NifB-like_rSAM"/>
</dbReference>
<dbReference type="InterPro" id="IPR032432">
    <property type="entry name" value="Radical_SAM_C"/>
</dbReference>
<dbReference type="InterPro" id="IPR007197">
    <property type="entry name" value="rSAM"/>
</dbReference>
<dbReference type="NCBIfam" id="TIGR01211">
    <property type="entry name" value="ELP3"/>
    <property type="match status" value="1"/>
</dbReference>
<dbReference type="PANTHER" id="PTHR11135:SF0">
    <property type="entry name" value="ELONGATOR COMPLEX PROTEIN 3"/>
    <property type="match status" value="1"/>
</dbReference>
<dbReference type="PANTHER" id="PTHR11135">
    <property type="entry name" value="HISTONE ACETYLTRANSFERASE-RELATED"/>
    <property type="match status" value="1"/>
</dbReference>
<dbReference type="Pfam" id="PF04055">
    <property type="entry name" value="Radical_SAM"/>
    <property type="match status" value="1"/>
</dbReference>
<dbReference type="Pfam" id="PF16199">
    <property type="entry name" value="Radical_SAM_C"/>
    <property type="match status" value="1"/>
</dbReference>
<dbReference type="PIRSF" id="PIRSF005669">
    <property type="entry name" value="Hist_AcTrfase_ELP3"/>
    <property type="match status" value="1"/>
</dbReference>
<dbReference type="SFLD" id="SFLDF00344">
    <property type="entry name" value="ELP3-like"/>
    <property type="match status" value="1"/>
</dbReference>
<dbReference type="SFLD" id="SFLDS00029">
    <property type="entry name" value="Radical_SAM"/>
    <property type="match status" value="1"/>
</dbReference>
<dbReference type="SMART" id="SM00729">
    <property type="entry name" value="Elp3"/>
    <property type="match status" value="1"/>
</dbReference>
<dbReference type="SUPFAM" id="SSF55729">
    <property type="entry name" value="Acyl-CoA N-acyltransferases (Nat)"/>
    <property type="match status" value="1"/>
</dbReference>
<dbReference type="SUPFAM" id="SSF102114">
    <property type="entry name" value="Radical SAM enzymes"/>
    <property type="match status" value="1"/>
</dbReference>
<dbReference type="PROSITE" id="PS51918">
    <property type="entry name" value="RADICAL_SAM"/>
    <property type="match status" value="1"/>
</dbReference>
<keyword id="KW-0002">3D-structure</keyword>
<keyword id="KW-0004">4Fe-4S</keyword>
<keyword id="KW-0012">Acyltransferase</keyword>
<keyword id="KW-0408">Iron</keyword>
<keyword id="KW-0411">Iron-sulfur</keyword>
<keyword id="KW-0479">Metal-binding</keyword>
<keyword id="KW-0694">RNA-binding</keyword>
<keyword id="KW-0949">S-adenosyl-L-methionine</keyword>
<keyword id="KW-0808">Transferase</keyword>
<keyword id="KW-0819">tRNA processing</keyword>
<keyword id="KW-0820">tRNA-binding</keyword>
<keyword id="KW-0862">Zinc</keyword>
<gene>
    <name type="ordered locus">cbdbA595</name>
</gene>
<feature type="chain" id="PRO_0000447990" description="tRNA uridine(34) acetyltransferase">
    <location>
        <begin position="1"/>
        <end position="459"/>
    </location>
</feature>
<feature type="domain" description="Radical SAM core" evidence="3">
    <location>
        <begin position="6"/>
        <end position="271"/>
    </location>
</feature>
<feature type="region of interest" description="Radical S-adenosyl-L-methionine (rSAM)" evidence="6">
    <location>
        <begin position="1"/>
        <end position="278"/>
    </location>
</feature>
<feature type="region of interest" description="N-acetyltransferase" evidence="6">
    <location>
        <begin position="308"/>
        <end position="459"/>
    </location>
</feature>
<feature type="binding site" evidence="2">
    <location>
        <position position="23"/>
    </location>
    <ligand>
        <name>[4Fe-4S] cluster</name>
        <dbReference type="ChEBI" id="CHEBI:49883"/>
        <note>4Fe-4S-S-AdoMet</note>
    </ligand>
</feature>
<feature type="binding site" evidence="4 5 10 11">
    <location>
        <position position="27"/>
    </location>
    <ligand>
        <name>[4Fe-4S] cluster</name>
        <dbReference type="ChEBI" id="CHEBI:49883"/>
        <note>4Fe-4S-S-AdoMet</note>
    </ligand>
</feature>
<feature type="binding site" evidence="4 5 10 11">
    <location>
        <position position="30"/>
    </location>
    <ligand>
        <name>[4Fe-4S] cluster</name>
        <dbReference type="ChEBI" id="CHEBI:49883"/>
        <note>4Fe-4S-S-AdoMet</note>
    </ligand>
</feature>
<feature type="binding site" evidence="5 11">
    <location>
        <position position="77"/>
    </location>
    <ligand>
        <name>acetyl-CoA</name>
        <dbReference type="ChEBI" id="CHEBI:57288"/>
    </ligand>
</feature>
<feature type="binding site" evidence="4 10">
    <location>
        <position position="310"/>
    </location>
    <ligand>
        <name>Zn(2+)</name>
        <dbReference type="ChEBI" id="CHEBI:29105"/>
    </ligand>
</feature>
<feature type="binding site" evidence="4 10">
    <location>
        <position position="312"/>
    </location>
    <ligand>
        <name>Zn(2+)</name>
        <dbReference type="ChEBI" id="CHEBI:29105"/>
    </ligand>
</feature>
<feature type="binding site" evidence="4 10">
    <location>
        <position position="315"/>
    </location>
    <ligand>
        <name>Zn(2+)</name>
        <dbReference type="ChEBI" id="CHEBI:29105"/>
    </ligand>
</feature>
<feature type="binding site" evidence="5 11">
    <location>
        <begin position="386"/>
        <end position="389"/>
    </location>
    <ligand>
        <name>acetyl-CoA</name>
        <dbReference type="ChEBI" id="CHEBI:57288"/>
    </ligand>
</feature>
<feature type="binding site" evidence="5 11">
    <location>
        <begin position="409"/>
        <end position="411"/>
    </location>
    <ligand>
        <name>acetyl-CoA</name>
        <dbReference type="ChEBI" id="CHEBI:57288"/>
    </ligand>
</feature>
<feature type="binding site" evidence="5 11">
    <location>
        <position position="442"/>
    </location>
    <ligand>
        <name>acetyl-CoA</name>
        <dbReference type="ChEBI" id="CHEBI:57288"/>
    </ligand>
</feature>
<feature type="mutagenesis site" description="Abolished tRNA-binding." evidence="4">
    <original>K</original>
    <variation>A</variation>
    <location>
        <position position="2"/>
    </location>
</feature>
<feature type="mutagenesis site" description="Abolished tRNA-binding." evidence="4">
    <original>K</original>
    <variation>A</variation>
    <location>
        <position position="3"/>
    </location>
</feature>
<feature type="mutagenesis site" description="Abolished tRNA-binding." evidence="4">
    <original>R</original>
    <variation>A</variation>
    <location>
        <position position="6"/>
    </location>
</feature>
<feature type="mutagenesis site" description="Does not abolish homodimerization." evidence="4">
    <original>CIYC</original>
    <variation>SIYS</variation>
    <location>
        <begin position="27"/>
        <end position="30"/>
    </location>
</feature>
<feature type="mutagenesis site" description="Slightly reduced tRNA-binding." evidence="4">
    <original>H</original>
    <variation>A</variation>
    <location>
        <position position="73"/>
    </location>
</feature>
<feature type="mutagenesis site" description="Slightly reduced tRNA-binding." evidence="4">
    <original>K</original>
    <variation>A</variation>
    <location>
        <position position="77"/>
    </location>
</feature>
<feature type="mutagenesis site" description="Slightly reduced tRNA-binding." evidence="4">
    <original>R</original>
    <variation>A</variation>
    <location>
        <position position="155"/>
    </location>
</feature>
<feature type="mutagenesis site" description="Slightly reduced tRNA-binding." evidence="4">
    <original>K</original>
    <variation>A</variation>
    <location>
        <position position="193"/>
    </location>
</feature>
<feature type="mutagenesis site" description="Reduced tRNA-binding." evidence="4">
    <original>K</original>
    <variation>A</variation>
    <location>
        <position position="229"/>
    </location>
</feature>
<feature type="mutagenesis site" description="Reduced tRNA-binding." evidence="4">
    <original>R</original>
    <variation>A</variation>
    <location>
        <position position="274"/>
    </location>
</feature>
<feature type="mutagenesis site" description="Reduced tRNA-binding." evidence="4">
    <original>R</original>
    <variation>A</variation>
    <location>
        <position position="277"/>
    </location>
</feature>
<feature type="mutagenesis site" description="Reduced tRNA-binding." evidence="4">
    <original>R</original>
    <variation>A</variation>
    <location>
        <position position="280"/>
    </location>
</feature>
<feature type="mutagenesis site" description="Reduced tRNA-binding." evidence="4">
    <original>R</original>
    <variation>A</variation>
    <location>
        <position position="314"/>
    </location>
</feature>
<feature type="strand" evidence="12">
    <location>
        <begin position="12"/>
        <end position="17"/>
    </location>
</feature>
<feature type="strand" evidence="13">
    <location>
        <begin position="28"/>
        <end position="30"/>
    </location>
</feature>
<feature type="helix" evidence="12">
    <location>
        <begin position="37"/>
        <end position="39"/>
    </location>
</feature>
<feature type="helix" evidence="12">
    <location>
        <begin position="45"/>
        <end position="52"/>
    </location>
</feature>
<feature type="turn" evidence="12">
    <location>
        <begin position="53"/>
        <end position="55"/>
    </location>
</feature>
<feature type="helix" evidence="12">
    <location>
        <begin position="57"/>
        <end position="71"/>
    </location>
</feature>
<feature type="strand" evidence="12">
    <location>
        <begin position="76"/>
        <end position="85"/>
    </location>
</feature>
<feature type="helix" evidence="12">
    <location>
        <begin position="87"/>
        <end position="89"/>
    </location>
</feature>
<feature type="helix" evidence="12">
    <location>
        <begin position="92"/>
        <end position="107"/>
    </location>
</feature>
<feature type="helix" evidence="12">
    <location>
        <begin position="114"/>
        <end position="121"/>
    </location>
</feature>
<feature type="strand" evidence="12">
    <location>
        <begin position="124"/>
        <end position="135"/>
    </location>
</feature>
<feature type="helix" evidence="12">
    <location>
        <begin position="142"/>
        <end position="151"/>
    </location>
</feature>
<feature type="strand" evidence="12">
    <location>
        <begin position="155"/>
        <end position="163"/>
    </location>
</feature>
<feature type="strand" evidence="12">
    <location>
        <begin position="170"/>
        <end position="173"/>
    </location>
</feature>
<feature type="helix" evidence="12">
    <location>
        <begin position="177"/>
        <end position="189"/>
    </location>
</feature>
<feature type="strand" evidence="12">
    <location>
        <begin position="193"/>
        <end position="198"/>
    </location>
</feature>
<feature type="helix" evidence="12">
    <location>
        <begin position="207"/>
        <end position="216"/>
    </location>
</feature>
<feature type="turn" evidence="12">
    <location>
        <begin position="217"/>
        <end position="219"/>
    </location>
</feature>
<feature type="strand" evidence="12">
    <location>
        <begin position="226"/>
        <end position="230"/>
    </location>
</feature>
<feature type="strand" evidence="13">
    <location>
        <begin position="237"/>
        <end position="239"/>
    </location>
</feature>
<feature type="helix" evidence="12">
    <location>
        <begin position="240"/>
        <end position="246"/>
    </location>
</feature>
<feature type="helix" evidence="12">
    <location>
        <begin position="255"/>
        <end position="266"/>
    </location>
</feature>
<feature type="strand" evidence="12">
    <location>
        <begin position="274"/>
        <end position="277"/>
    </location>
</feature>
<feature type="helix" evidence="12">
    <location>
        <begin position="314"/>
        <end position="316"/>
    </location>
</feature>
<feature type="strand" evidence="12">
    <location>
        <begin position="332"/>
        <end position="340"/>
    </location>
</feature>
<feature type="strand" evidence="12">
    <location>
        <begin position="343"/>
        <end position="351"/>
    </location>
</feature>
<feature type="strand" evidence="12">
    <location>
        <begin position="357"/>
        <end position="365"/>
    </location>
</feature>
<feature type="strand" evidence="13">
    <location>
        <begin position="375"/>
        <end position="377"/>
    </location>
</feature>
<feature type="strand" evidence="12">
    <location>
        <begin position="381"/>
        <end position="389"/>
    </location>
</feature>
<feature type="helix" evidence="12">
    <location>
        <begin position="408"/>
        <end position="423"/>
    </location>
</feature>
<feature type="strand" evidence="12">
    <location>
        <begin position="428"/>
        <end position="432"/>
    </location>
</feature>
<feature type="helix" evidence="12">
    <location>
        <begin position="436"/>
        <end position="438"/>
    </location>
</feature>
<feature type="helix" evidence="12">
    <location>
        <begin position="439"/>
        <end position="443"/>
    </location>
</feature>
<feature type="turn" evidence="12">
    <location>
        <begin position="444"/>
        <end position="446"/>
    </location>
</feature>
<feature type="strand" evidence="12">
    <location>
        <begin position="448"/>
        <end position="450"/>
    </location>
</feature>
<feature type="strand" evidence="12">
    <location>
        <begin position="453"/>
        <end position="457"/>
    </location>
</feature>
<organism>
    <name type="scientific">Dehalococcoides mccartyi (strain CBDB1)</name>
    <dbReference type="NCBI Taxonomy" id="255470"/>
    <lineage>
        <taxon>Bacteria</taxon>
        <taxon>Bacillati</taxon>
        <taxon>Chloroflexota</taxon>
        <taxon>Dehalococcoidia</taxon>
        <taxon>Dehalococcoidales</taxon>
        <taxon>Dehalococcoidaceae</taxon>
        <taxon>Dehalococcoides</taxon>
    </lineage>
</organism>
<protein>
    <recommendedName>
        <fullName evidence="8">tRNA uridine(34) acetyltransferase</fullName>
        <ecNumber evidence="4">2.3.1.311</ecNumber>
    </recommendedName>
    <alternativeName>
        <fullName evidence="7">Elongator complex protein 3 homolog</fullName>
        <shortName evidence="6 7">DmcElp3</shortName>
    </alternativeName>
</protein>
<accession>A0A1C7D1B7</accession>
<sequence length="459" mass="51188">MKKLSRTISGVTPVAVMTKPLPCPGKCIYCPTFAATPQSYTPESPAVLRAKSCEYQAYKQVALRLRIIQDMGHPTDKVELIIMGGTFLSADITYQYGFIKDCYDALNGVVAGSLEEAKTINETAQHRCVGLCIETRPDICGKAEIQRMIDFGTTRVELGVQMLDDDIYKLVERGHRVSDVAEATCLLREYGLKVHYHWMPGLPGSSPEKDLALSRMVFEDPRFCPDGLKLYPTMVVEGTILEQWWKEGRYTPYPNGTMTGLIADIKALVPPYVRISRVLRDIPAVFISAGLKDSLRDGVRQILESRHQKCRCIRCREYGHRQRKGQTSGEPTLRRLDYPASGGKEIFLSFEDASDTLYGLLRLRIPCASLPVLGQKYGAKTGLVRELHVYGTELSLGEQGDQSAQHRGLGRKLLAEAECLARDEFGLDSLAILSGVGAREYYRSLGYELVAGYMCKHLD</sequence>
<comment type="function">
    <text evidence="1 4">tRNA uridine(34) acetyltransferase, which mediates formation of carboxymethyluridine in the wobble base at position 34 in tRNAs (PubMed:27455459). The proposed mechanism is the following: (i) recruits S-adenosyl-L-methionine and cleaves it to generate a 5'-deoxyadenosine radical (5'-dA) in the radical S-adenosyl-L-methionine (rSAM) region, (ii) hydrolyzes acetyl-CoA in the N-acetyltransferase domain and (iii) an acetyl radical is formed by the products of the two domains and (iv) is transferred onto the C5 position of uridine(34) in the bound tRNA molecule. Does not show protein lysine acetyltransferase activity (By similarity).</text>
</comment>
<comment type="catalytic activity">
    <reaction evidence="4">
        <text>uridine(34) in tRNA + acetyl-CoA + S-adenosyl-L-methionine + H2O = 5-(carboxymethyl)uridine(34) in tRNA + 5'-deoxyadenosine + L-methionine + CoA + 2 H(+)</text>
        <dbReference type="Rhea" id="RHEA:61020"/>
        <dbReference type="Rhea" id="RHEA-COMP:10407"/>
        <dbReference type="Rhea" id="RHEA-COMP:11727"/>
        <dbReference type="ChEBI" id="CHEBI:15377"/>
        <dbReference type="ChEBI" id="CHEBI:15378"/>
        <dbReference type="ChEBI" id="CHEBI:17319"/>
        <dbReference type="ChEBI" id="CHEBI:57287"/>
        <dbReference type="ChEBI" id="CHEBI:57288"/>
        <dbReference type="ChEBI" id="CHEBI:57844"/>
        <dbReference type="ChEBI" id="CHEBI:59789"/>
        <dbReference type="ChEBI" id="CHEBI:65315"/>
        <dbReference type="ChEBI" id="CHEBI:74882"/>
        <dbReference type="EC" id="2.3.1.311"/>
    </reaction>
    <physiologicalReaction direction="left-to-right" evidence="4">
        <dbReference type="Rhea" id="RHEA:61021"/>
    </physiologicalReaction>
</comment>
<comment type="cofactor">
    <cofactor evidence="4">
        <name>[4Fe-4S] cluster</name>
        <dbReference type="ChEBI" id="CHEBI:49883"/>
    </cofactor>
    <text evidence="2">Binds 1 [4Fe-4S] cluster. The cluster is coordinated with 3 cysteines and an exchangeable S-adenosyl-L-methionine.</text>
</comment>
<comment type="pathway">
    <text evidence="4">tRNA modification.</text>
</comment>
<comment type="subunit">
    <text evidence="4">Homodimer.</text>
</comment>
<comment type="similarity">
    <text evidence="8">Belongs to the ELP3 family.</text>
</comment>
<reference key="1">
    <citation type="journal article" date="2005" name="Nat. Biotechnol.">
        <title>Genome sequence of the chlorinated compound-respiring bacterium Dehalococcoides species strain CBDB1.</title>
        <authorList>
            <person name="Kube M."/>
            <person name="Beck A."/>
            <person name="Zinder S.H."/>
            <person name="Kuhl H."/>
            <person name="Reinhardt R."/>
            <person name="Adrian L."/>
        </authorList>
    </citation>
    <scope>NUCLEOTIDE SEQUENCE [LARGE SCALE GENOMIC DNA]</scope>
    <source>
        <strain>CBDB1</strain>
    </source>
</reference>
<reference evidence="9" key="2">
    <citation type="journal article" date="2016" name="Nat. Struct. Mol. Biol.">
        <title>Structural basis for tRNA modification by Elp3 from Dehalococcoides mccartyi.</title>
        <authorList>
            <person name="Glatt S."/>
            <person name="Zabel R."/>
            <person name="Kolaj-Robin O."/>
            <person name="Onuma O.F."/>
            <person name="Baudin F."/>
            <person name="Graziadei A."/>
            <person name="Taverniti V."/>
            <person name="Lin T.Y."/>
            <person name="Baymann F."/>
            <person name="Seraphin B."/>
            <person name="Breunig K.D."/>
            <person name="Mueller C.W."/>
        </authorList>
    </citation>
    <scope>X-RAY CRYSTALLOGRAPHY (2.59 ANGSTROMS) IN COMPLEX WITH IRON-SULFUR AND ZINC</scope>
    <scope>FUNCTION</scope>
    <scope>CATALYTIC ACTIVITY</scope>
    <scope>PATHWAY</scope>
    <scope>COFACTOR</scope>
    <scope>SUBUNIT</scope>
    <scope>MUTAGENESIS OF LYS-2; LYS-3; ARG-6; 27-CYS--CYS-30; HIS-73; LYS-77; ARG-155; LYS-193; LYS-229; ARG-274; ARG-277; ARG-280 AND ARG-314</scope>
</reference>
<reference evidence="11" key="3">
    <citation type="journal article" date="2019" name="Nat. Commun.">
        <title>The Elongator subunit Elp3 is a non-canonical tRNA acetyltransferase.</title>
        <authorList>
            <person name="Lin T.Y."/>
            <person name="Abbassi N.E.H."/>
            <person name="Zakrzewski K."/>
            <person name="Chramiec-Glabik A."/>
            <person name="Jemiola-Rzeminska M."/>
            <person name="Rozycki J."/>
            <person name="Glatt S."/>
        </authorList>
    </citation>
    <scope>X-RAY CRYSTALLOGRAPHY (2.70 ANGSTROMS) OF 2-446 IN COMPLEX WITH ACETYL-COA AND IRON-SULFUR</scope>
</reference>
<evidence type="ECO:0000250" key="1">
    <source>
        <dbReference type="UniProtKB" id="D5VRB9"/>
    </source>
</evidence>
<evidence type="ECO:0000250" key="2">
    <source>
        <dbReference type="UniProtKB" id="Q02908"/>
    </source>
</evidence>
<evidence type="ECO:0000255" key="3">
    <source>
        <dbReference type="PROSITE-ProRule" id="PRU01266"/>
    </source>
</evidence>
<evidence type="ECO:0000269" key="4">
    <source>
    </source>
</evidence>
<evidence type="ECO:0000269" key="5">
    <source>
    </source>
</evidence>
<evidence type="ECO:0000303" key="6">
    <source>
    </source>
</evidence>
<evidence type="ECO:0000303" key="7">
    <source>
    </source>
</evidence>
<evidence type="ECO:0000305" key="8"/>
<evidence type="ECO:0000312" key="9">
    <source>
        <dbReference type="PDB" id="5L7L"/>
    </source>
</evidence>
<evidence type="ECO:0007744" key="10">
    <source>
        <dbReference type="PDB" id="5L7L"/>
    </source>
</evidence>
<evidence type="ECO:0007744" key="11">
    <source>
        <dbReference type="PDB" id="6IA6"/>
    </source>
</evidence>
<evidence type="ECO:0007829" key="12">
    <source>
        <dbReference type="PDB" id="5L7L"/>
    </source>
</evidence>
<evidence type="ECO:0007829" key="13">
    <source>
        <dbReference type="PDB" id="6IA6"/>
    </source>
</evidence>
<proteinExistence type="evidence at protein level"/>